<organismHost>
    <name type="scientific">Homo sapiens</name>
    <name type="common">Human</name>
    <dbReference type="NCBI Taxonomy" id="9606"/>
</organismHost>
<dbReference type="EMBL" id="M35027">
    <property type="protein sequence ID" value="AAA48219.1"/>
    <property type="molecule type" value="Genomic_DNA"/>
</dbReference>
<dbReference type="PIR" id="A42528">
    <property type="entry name" value="A42528"/>
</dbReference>
<dbReference type="Proteomes" id="UP000008269">
    <property type="component" value="Segment"/>
</dbReference>
<evidence type="ECO:0000256" key="1">
    <source>
        <dbReference type="SAM" id="MobiDB-lite"/>
    </source>
</evidence>
<evidence type="ECO:0000305" key="2"/>
<gene>
    <name type="ORF">B20R</name>
</gene>
<organism>
    <name type="scientific">Vaccinia virus (strain Copenhagen)</name>
    <name type="common">VACV</name>
    <dbReference type="NCBI Taxonomy" id="10249"/>
    <lineage>
        <taxon>Viruses</taxon>
        <taxon>Varidnaviria</taxon>
        <taxon>Bamfordvirae</taxon>
        <taxon>Nucleocytoviricota</taxon>
        <taxon>Pokkesviricetes</taxon>
        <taxon>Chitovirales</taxon>
        <taxon>Poxviridae</taxon>
        <taxon>Chordopoxvirinae</taxon>
        <taxon>Orthopoxvirus</taxon>
        <taxon>Vaccinia virus</taxon>
    </lineage>
</organism>
<protein>
    <recommendedName>
        <fullName>Protein B20</fullName>
    </recommendedName>
</protein>
<feature type="chain" id="PRO_0000099372" description="Protein B20">
    <location>
        <begin position="1"/>
        <end position="127"/>
    </location>
</feature>
<feature type="region of interest" description="Disordered" evidence="1">
    <location>
        <begin position="86"/>
        <end position="127"/>
    </location>
</feature>
<feature type="compositionally biased region" description="Acidic residues" evidence="1">
    <location>
        <begin position="108"/>
        <end position="118"/>
    </location>
</feature>
<proteinExistence type="predicted"/>
<comment type="caution">
    <text evidence="2">B20 in WR does not correspond to B20 in Copenhagen.</text>
</comment>
<accession>P21078</accession>
<reference key="1">
    <citation type="journal article" date="1990" name="Virology">
        <title>The complete DNA sequence of vaccinia virus.</title>
        <authorList>
            <person name="Goebel S.J."/>
            <person name="Johnson G.P."/>
            <person name="Perkus M.E."/>
            <person name="Davis S.W."/>
            <person name="Winslow J.P."/>
            <person name="Paoletti E."/>
        </authorList>
    </citation>
    <scope>NUCLEOTIDE SEQUENCE [LARGE SCALE GENOMIC DNA]</scope>
</reference>
<reference key="2">
    <citation type="journal article" date="1990" name="Virology">
        <title>Appendix to 'The complete DNA sequence of vaccinia virus'.</title>
        <authorList>
            <person name="Goebel S.J."/>
            <person name="Johnson G.P."/>
            <person name="Perkus M.E."/>
            <person name="Davis S.W."/>
            <person name="Winslow J.P."/>
            <person name="Paoletti E."/>
        </authorList>
    </citation>
    <scope>NUCLEOTIDE SEQUENCE [LARGE SCALE GENOMIC DNA]</scope>
</reference>
<sequence>MDEDTRLSRYLYLTDREHINVDSIKQLCKISDPNACYRCGCTALHEYFYNYRSVNGKYKYRYNGYYQYYSSSDYENYNEYYYDDYDRTGMNSESDSESDNISIKTEYENEYEFYDETQDQSTQHNDL</sequence>
<name>VB20_VACCC</name>
<keyword id="KW-1185">Reference proteome</keyword>